<gene>
    <name evidence="1" type="primary">CYN1</name>
    <name type="ORF">BDBG_02772</name>
</gene>
<sequence length="159" mass="17598">MSNLNLATLDISEHANLPTSSEVLFKAKADKKLSFESIAAAIGRNEVATAAIFYGQAKASEEDIAKLAQVLEIDHAHLESLLSGFPDRGKSVSFPPKDPLIYRLYEIVQNYGYAYKAVMNEKFGDGIMSAISFSTTVEKETDKDGNNWAVVTWRGKWYV</sequence>
<protein>
    <recommendedName>
        <fullName evidence="1">Cyanate hydratase</fullName>
        <shortName evidence="1">Cyanase</shortName>
        <ecNumber evidence="1">4.2.1.104</ecNumber>
    </recommendedName>
    <alternativeName>
        <fullName evidence="1">Cyanate hydrolase</fullName>
    </alternativeName>
    <alternativeName>
        <fullName evidence="1">Cyanate lyase</fullName>
    </alternativeName>
</protein>
<keyword id="KW-0456">Lyase</keyword>
<keyword id="KW-1185">Reference proteome</keyword>
<comment type="function">
    <text evidence="1">Catalyzes the reaction of cyanate with bicarbonate to produce ammonia and carbon dioxide.</text>
</comment>
<comment type="catalytic activity">
    <reaction evidence="1">
        <text>cyanate + hydrogencarbonate + 3 H(+) = NH4(+) + 2 CO2</text>
        <dbReference type="Rhea" id="RHEA:11120"/>
        <dbReference type="ChEBI" id="CHEBI:15378"/>
        <dbReference type="ChEBI" id="CHEBI:16526"/>
        <dbReference type="ChEBI" id="CHEBI:17544"/>
        <dbReference type="ChEBI" id="CHEBI:28938"/>
        <dbReference type="ChEBI" id="CHEBI:29195"/>
        <dbReference type="EC" id="4.2.1.104"/>
    </reaction>
</comment>
<comment type="similarity">
    <text evidence="1">Belongs to the cyanase family.</text>
</comment>
<proteinExistence type="inferred from homology"/>
<reference key="1">
    <citation type="journal article" date="2015" name="PLoS Genet.">
        <title>The dynamic genome and transcriptome of the human fungal pathogen Blastomyces and close relative Emmonsia.</title>
        <authorList>
            <person name="Munoz J.F."/>
            <person name="Gauthier G.M."/>
            <person name="Desjardins C.A."/>
            <person name="Gallo J.E."/>
            <person name="Holder J."/>
            <person name="Sullivan T.D."/>
            <person name="Marty A.J."/>
            <person name="Carmen J.C."/>
            <person name="Chen Z."/>
            <person name="Ding L."/>
            <person name="Gujja S."/>
            <person name="Magrini V."/>
            <person name="Misas E."/>
            <person name="Mitreva M."/>
            <person name="Priest M."/>
            <person name="Saif S."/>
            <person name="Whiston E.A."/>
            <person name="Young S."/>
            <person name="Zeng Q."/>
            <person name="Goldman W.E."/>
            <person name="Mardis E.R."/>
            <person name="Taylor J.W."/>
            <person name="McEwen J.G."/>
            <person name="Clay O.K."/>
            <person name="Klein B.S."/>
            <person name="Cuomo C.A."/>
        </authorList>
    </citation>
    <scope>NUCLEOTIDE SEQUENCE [LARGE SCALE GENOMIC DNA]</scope>
    <source>
        <strain>SLH14081</strain>
    </source>
</reference>
<dbReference type="EC" id="4.2.1.104" evidence="1"/>
<dbReference type="EMBL" id="GG657451">
    <property type="protein sequence ID" value="OAT06585.1"/>
    <property type="molecule type" value="Genomic_DNA"/>
</dbReference>
<dbReference type="RefSeq" id="XP_002626595.1">
    <property type="nucleotide sequence ID" value="XM_002626549.1"/>
</dbReference>
<dbReference type="SMR" id="C5JJW0"/>
<dbReference type="STRING" id="559298.C5JJW0"/>
<dbReference type="GeneID" id="8506117"/>
<dbReference type="KEGG" id="bgh:BDBG_02772"/>
<dbReference type="VEuPathDB" id="FungiDB:BDBG_02772"/>
<dbReference type="HOGENOM" id="CLU_103452_0_0_1"/>
<dbReference type="OrthoDB" id="10019422at2759"/>
<dbReference type="Proteomes" id="UP000002038">
    <property type="component" value="Unassembled WGS sequence"/>
</dbReference>
<dbReference type="GO" id="GO:0008824">
    <property type="term" value="F:cyanate hydratase activity"/>
    <property type="evidence" value="ECO:0007669"/>
    <property type="project" value="UniProtKB-UniRule"/>
</dbReference>
<dbReference type="GO" id="GO:0003677">
    <property type="term" value="F:DNA binding"/>
    <property type="evidence" value="ECO:0007669"/>
    <property type="project" value="InterPro"/>
</dbReference>
<dbReference type="GO" id="GO:0009439">
    <property type="term" value="P:cyanate metabolic process"/>
    <property type="evidence" value="ECO:0007669"/>
    <property type="project" value="UniProtKB-UniRule"/>
</dbReference>
<dbReference type="CDD" id="cd00559">
    <property type="entry name" value="Cyanase_C"/>
    <property type="match status" value="1"/>
</dbReference>
<dbReference type="Gene3D" id="3.30.1160.10">
    <property type="entry name" value="Cyanate lyase, C-terminal domain"/>
    <property type="match status" value="1"/>
</dbReference>
<dbReference type="Gene3D" id="1.10.260.40">
    <property type="entry name" value="lambda repressor-like DNA-binding domains"/>
    <property type="match status" value="1"/>
</dbReference>
<dbReference type="HAMAP" id="MF_00535">
    <property type="entry name" value="Cyanate_hydrat"/>
    <property type="match status" value="1"/>
</dbReference>
<dbReference type="InterPro" id="IPR008076">
    <property type="entry name" value="Cyanase"/>
</dbReference>
<dbReference type="InterPro" id="IPR003712">
    <property type="entry name" value="Cyanate_lyase_C"/>
</dbReference>
<dbReference type="InterPro" id="IPR036581">
    <property type="entry name" value="Cyanate_lyase_C_sf"/>
</dbReference>
<dbReference type="InterPro" id="IPR010982">
    <property type="entry name" value="Lambda_DNA-bd_dom_sf"/>
</dbReference>
<dbReference type="NCBIfam" id="TIGR00673">
    <property type="entry name" value="cynS"/>
    <property type="match status" value="1"/>
</dbReference>
<dbReference type="PANTHER" id="PTHR34186">
    <property type="entry name" value="CYANATE HYDRATASE"/>
    <property type="match status" value="1"/>
</dbReference>
<dbReference type="PANTHER" id="PTHR34186:SF2">
    <property type="entry name" value="CYANATE HYDRATASE"/>
    <property type="match status" value="1"/>
</dbReference>
<dbReference type="Pfam" id="PF02560">
    <property type="entry name" value="Cyanate_lyase"/>
    <property type="match status" value="1"/>
</dbReference>
<dbReference type="PIRSF" id="PIRSF001263">
    <property type="entry name" value="Cyanate_hydratas"/>
    <property type="match status" value="1"/>
</dbReference>
<dbReference type="PRINTS" id="PR01693">
    <property type="entry name" value="CYANASE"/>
</dbReference>
<dbReference type="SMART" id="SM01116">
    <property type="entry name" value="Cyanate_lyase"/>
    <property type="match status" value="1"/>
</dbReference>
<dbReference type="SUPFAM" id="SSF55234">
    <property type="entry name" value="Cyanase C-terminal domain"/>
    <property type="match status" value="1"/>
</dbReference>
<dbReference type="SUPFAM" id="SSF47413">
    <property type="entry name" value="lambda repressor-like DNA-binding domains"/>
    <property type="match status" value="1"/>
</dbReference>
<feature type="chain" id="PRO_0000403238" description="Cyanate hydratase">
    <location>
        <begin position="1"/>
        <end position="159"/>
    </location>
</feature>
<feature type="active site" evidence="1">
    <location>
        <position position="103"/>
    </location>
</feature>
<feature type="active site" evidence="1">
    <location>
        <position position="106"/>
    </location>
</feature>
<feature type="active site" evidence="1">
    <location>
        <position position="129"/>
    </location>
</feature>
<evidence type="ECO:0000255" key="1">
    <source>
        <dbReference type="HAMAP-Rule" id="MF_03139"/>
    </source>
</evidence>
<accession>C5JJW0</accession>
<accession>A0A179UEY4</accession>
<organism>
    <name type="scientific">Blastomyces gilchristii (strain SLH14081)</name>
    <name type="common">Blastomyces dermatitidis</name>
    <dbReference type="NCBI Taxonomy" id="559298"/>
    <lineage>
        <taxon>Eukaryota</taxon>
        <taxon>Fungi</taxon>
        <taxon>Dikarya</taxon>
        <taxon>Ascomycota</taxon>
        <taxon>Pezizomycotina</taxon>
        <taxon>Eurotiomycetes</taxon>
        <taxon>Eurotiomycetidae</taxon>
        <taxon>Onygenales</taxon>
        <taxon>Ajellomycetaceae</taxon>
        <taxon>Blastomyces</taxon>
    </lineage>
</organism>
<name>CYNS_BLAGS</name>